<evidence type="ECO:0000255" key="1">
    <source>
        <dbReference type="PROSITE-ProRule" id="PRU00288"/>
    </source>
</evidence>
<evidence type="ECO:0000256" key="2">
    <source>
        <dbReference type="SAM" id="MobiDB-lite"/>
    </source>
</evidence>
<evidence type="ECO:0000269" key="3">
    <source>
    </source>
</evidence>
<evidence type="ECO:0000305" key="4"/>
<proteinExistence type="predicted"/>
<protein>
    <recommendedName>
        <fullName>Uncharacterized protein C622.14</fullName>
    </recommendedName>
</protein>
<organism>
    <name type="scientific">Schizosaccharomyces pombe (strain 972 / ATCC 24843)</name>
    <name type="common">Fission yeast</name>
    <dbReference type="NCBI Taxonomy" id="284812"/>
    <lineage>
        <taxon>Eukaryota</taxon>
        <taxon>Fungi</taxon>
        <taxon>Dikarya</taxon>
        <taxon>Ascomycota</taxon>
        <taxon>Taphrinomycotina</taxon>
        <taxon>Schizosaccharomycetes</taxon>
        <taxon>Schizosaccharomycetales</taxon>
        <taxon>Schizosaccharomycetaceae</taxon>
        <taxon>Schizosaccharomyces</taxon>
    </lineage>
</organism>
<dbReference type="EMBL" id="CU329672">
    <property type="protein sequence ID" value="CAA21870.2"/>
    <property type="molecule type" value="Genomic_DNA"/>
</dbReference>
<dbReference type="PIR" id="T41494">
    <property type="entry name" value="T41494"/>
</dbReference>
<dbReference type="RefSeq" id="NP_588186.2">
    <property type="nucleotide sequence ID" value="NM_001023176.3"/>
</dbReference>
<dbReference type="SMR" id="O94601"/>
<dbReference type="BioGRID" id="275752">
    <property type="interactions" value="14"/>
</dbReference>
<dbReference type="FunCoup" id="O94601">
    <property type="interactions" value="341"/>
</dbReference>
<dbReference type="STRING" id="284812.O94601"/>
<dbReference type="iPTMnet" id="O94601"/>
<dbReference type="PaxDb" id="4896-SPCC622.14.1"/>
<dbReference type="EnsemblFungi" id="SPCC622.14.1">
    <property type="protein sequence ID" value="SPCC622.14.1:pep"/>
    <property type="gene ID" value="SPCC622.14"/>
</dbReference>
<dbReference type="KEGG" id="spo:2539181"/>
<dbReference type="PomBase" id="SPCC622.14"/>
<dbReference type="VEuPathDB" id="FungiDB:SPCC622.14"/>
<dbReference type="eggNOG" id="KOG0704">
    <property type="taxonomic scope" value="Eukaryota"/>
</dbReference>
<dbReference type="HOGENOM" id="CLU_044516_2_0_1"/>
<dbReference type="InParanoid" id="O94601"/>
<dbReference type="OMA" id="MWEIDPE"/>
<dbReference type="PhylomeDB" id="O94601"/>
<dbReference type="Reactome" id="R-SPO-6807878">
    <property type="pathway name" value="COPI-mediated anterograde transport"/>
</dbReference>
<dbReference type="Reactome" id="R-SPO-6811434">
    <property type="pathway name" value="COPI-dependent Golgi-to-ER retrograde traffic"/>
</dbReference>
<dbReference type="PRO" id="PR:O94601"/>
<dbReference type="Proteomes" id="UP000002485">
    <property type="component" value="Chromosome III"/>
</dbReference>
<dbReference type="GO" id="GO:0005737">
    <property type="term" value="C:cytoplasm"/>
    <property type="evidence" value="ECO:0007005"/>
    <property type="project" value="PomBase"/>
</dbReference>
<dbReference type="GO" id="GO:0000139">
    <property type="term" value="C:Golgi membrane"/>
    <property type="evidence" value="ECO:0007669"/>
    <property type="project" value="GOC"/>
</dbReference>
<dbReference type="GO" id="GO:0005096">
    <property type="term" value="F:GTPase activator activity"/>
    <property type="evidence" value="ECO:0000266"/>
    <property type="project" value="PomBase"/>
</dbReference>
<dbReference type="GO" id="GO:0008270">
    <property type="term" value="F:zinc ion binding"/>
    <property type="evidence" value="ECO:0007669"/>
    <property type="project" value="UniProtKB-KW"/>
</dbReference>
<dbReference type="GO" id="GO:0048205">
    <property type="term" value="P:COPI coating of Golgi vesicle"/>
    <property type="evidence" value="ECO:0000318"/>
    <property type="project" value="GO_Central"/>
</dbReference>
<dbReference type="CDD" id="cd08830">
    <property type="entry name" value="ArfGap_ArfGap1"/>
    <property type="match status" value="1"/>
</dbReference>
<dbReference type="FunFam" id="1.10.220.150:FF:000014">
    <property type="entry name" value="ADP-ribosylation factor GTPase-activating protein"/>
    <property type="match status" value="1"/>
</dbReference>
<dbReference type="Gene3D" id="1.10.220.150">
    <property type="entry name" value="Arf GTPase activating protein"/>
    <property type="match status" value="1"/>
</dbReference>
<dbReference type="InterPro" id="IPR037278">
    <property type="entry name" value="ARFGAP/RecO"/>
</dbReference>
<dbReference type="InterPro" id="IPR001164">
    <property type="entry name" value="ArfGAP_dom"/>
</dbReference>
<dbReference type="InterPro" id="IPR038508">
    <property type="entry name" value="ArfGAP_dom_sf"/>
</dbReference>
<dbReference type="PANTHER" id="PTHR46395">
    <property type="entry name" value="ADP-RIBOSYLATION FACTOR GTPASE-ACTIVATING PROTEIN 1"/>
    <property type="match status" value="1"/>
</dbReference>
<dbReference type="PANTHER" id="PTHR46395:SF1">
    <property type="entry name" value="ADP-RIBOSYLATION FACTOR GTPASE-ACTIVATING PROTEIN 1"/>
    <property type="match status" value="1"/>
</dbReference>
<dbReference type="Pfam" id="PF01412">
    <property type="entry name" value="ArfGap"/>
    <property type="match status" value="1"/>
</dbReference>
<dbReference type="PRINTS" id="PR00405">
    <property type="entry name" value="REVINTRACTNG"/>
</dbReference>
<dbReference type="SMART" id="SM00105">
    <property type="entry name" value="ArfGap"/>
    <property type="match status" value="1"/>
</dbReference>
<dbReference type="SUPFAM" id="SSF57863">
    <property type="entry name" value="ArfGap/RecO-like zinc finger"/>
    <property type="match status" value="1"/>
</dbReference>
<dbReference type="PROSITE" id="PS50115">
    <property type="entry name" value="ARFGAP"/>
    <property type="match status" value="1"/>
</dbReference>
<keyword id="KW-0963">Cytoplasm</keyword>
<keyword id="KW-0343">GTPase activation</keyword>
<keyword id="KW-0479">Metal-binding</keyword>
<keyword id="KW-1185">Reference proteome</keyword>
<keyword id="KW-0862">Zinc</keyword>
<keyword id="KW-0863">Zinc-finger</keyword>
<reference key="1">
    <citation type="journal article" date="2002" name="Nature">
        <title>The genome sequence of Schizosaccharomyces pombe.</title>
        <authorList>
            <person name="Wood V."/>
            <person name="Gwilliam R."/>
            <person name="Rajandream M.A."/>
            <person name="Lyne M.H."/>
            <person name="Lyne R."/>
            <person name="Stewart A."/>
            <person name="Sgouros J.G."/>
            <person name="Peat N."/>
            <person name="Hayles J."/>
            <person name="Baker S.G."/>
            <person name="Basham D."/>
            <person name="Bowman S."/>
            <person name="Brooks K."/>
            <person name="Brown D."/>
            <person name="Brown S."/>
            <person name="Chillingworth T."/>
            <person name="Churcher C.M."/>
            <person name="Collins M."/>
            <person name="Connor R."/>
            <person name="Cronin A."/>
            <person name="Davis P."/>
            <person name="Feltwell T."/>
            <person name="Fraser A."/>
            <person name="Gentles S."/>
            <person name="Goble A."/>
            <person name="Hamlin N."/>
            <person name="Harris D.E."/>
            <person name="Hidalgo J."/>
            <person name="Hodgson G."/>
            <person name="Holroyd S."/>
            <person name="Hornsby T."/>
            <person name="Howarth S."/>
            <person name="Huckle E.J."/>
            <person name="Hunt S."/>
            <person name="Jagels K."/>
            <person name="James K.D."/>
            <person name="Jones L."/>
            <person name="Jones M."/>
            <person name="Leather S."/>
            <person name="McDonald S."/>
            <person name="McLean J."/>
            <person name="Mooney P."/>
            <person name="Moule S."/>
            <person name="Mungall K.L."/>
            <person name="Murphy L.D."/>
            <person name="Niblett D."/>
            <person name="Odell C."/>
            <person name="Oliver K."/>
            <person name="O'Neil S."/>
            <person name="Pearson D."/>
            <person name="Quail M.A."/>
            <person name="Rabbinowitsch E."/>
            <person name="Rutherford K.M."/>
            <person name="Rutter S."/>
            <person name="Saunders D."/>
            <person name="Seeger K."/>
            <person name="Sharp S."/>
            <person name="Skelton J."/>
            <person name="Simmonds M.N."/>
            <person name="Squares R."/>
            <person name="Squares S."/>
            <person name="Stevens K."/>
            <person name="Taylor K."/>
            <person name="Taylor R.G."/>
            <person name="Tivey A."/>
            <person name="Walsh S.V."/>
            <person name="Warren T."/>
            <person name="Whitehead S."/>
            <person name="Woodward J.R."/>
            <person name="Volckaert G."/>
            <person name="Aert R."/>
            <person name="Robben J."/>
            <person name="Grymonprez B."/>
            <person name="Weltjens I."/>
            <person name="Vanstreels E."/>
            <person name="Rieger M."/>
            <person name="Schaefer M."/>
            <person name="Mueller-Auer S."/>
            <person name="Gabel C."/>
            <person name="Fuchs M."/>
            <person name="Duesterhoeft A."/>
            <person name="Fritzc C."/>
            <person name="Holzer E."/>
            <person name="Moestl D."/>
            <person name="Hilbert H."/>
            <person name="Borzym K."/>
            <person name="Langer I."/>
            <person name="Beck A."/>
            <person name="Lehrach H."/>
            <person name="Reinhardt R."/>
            <person name="Pohl T.M."/>
            <person name="Eger P."/>
            <person name="Zimmermann W."/>
            <person name="Wedler H."/>
            <person name="Wambutt R."/>
            <person name="Purnelle B."/>
            <person name="Goffeau A."/>
            <person name="Cadieu E."/>
            <person name="Dreano S."/>
            <person name="Gloux S."/>
            <person name="Lelaure V."/>
            <person name="Mottier S."/>
            <person name="Galibert F."/>
            <person name="Aves S.J."/>
            <person name="Xiang Z."/>
            <person name="Hunt C."/>
            <person name="Moore K."/>
            <person name="Hurst S.M."/>
            <person name="Lucas M."/>
            <person name="Rochet M."/>
            <person name="Gaillardin C."/>
            <person name="Tallada V.A."/>
            <person name="Garzon A."/>
            <person name="Thode G."/>
            <person name="Daga R.R."/>
            <person name="Cruzado L."/>
            <person name="Jimenez J."/>
            <person name="Sanchez M."/>
            <person name="del Rey F."/>
            <person name="Benito J."/>
            <person name="Dominguez A."/>
            <person name="Revuelta J.L."/>
            <person name="Moreno S."/>
            <person name="Armstrong J."/>
            <person name="Forsburg S.L."/>
            <person name="Cerutti L."/>
            <person name="Lowe T."/>
            <person name="McCombie W.R."/>
            <person name="Paulsen I."/>
            <person name="Potashkin J."/>
            <person name="Shpakovski G.V."/>
            <person name="Ussery D."/>
            <person name="Barrell B.G."/>
            <person name="Nurse P."/>
        </authorList>
    </citation>
    <scope>NUCLEOTIDE SEQUENCE [LARGE SCALE GENOMIC DNA]</scope>
    <source>
        <strain>972 / ATCC 24843</strain>
    </source>
</reference>
<reference key="2">
    <citation type="journal article" date="2006" name="Nat. Biotechnol.">
        <title>ORFeome cloning and global analysis of protein localization in the fission yeast Schizosaccharomyces pombe.</title>
        <authorList>
            <person name="Matsuyama A."/>
            <person name="Arai R."/>
            <person name="Yashiroda Y."/>
            <person name="Shirai A."/>
            <person name="Kamata A."/>
            <person name="Sekido S."/>
            <person name="Kobayashi Y."/>
            <person name="Hashimoto A."/>
            <person name="Hamamoto M."/>
            <person name="Hiraoka Y."/>
            <person name="Horinouchi S."/>
            <person name="Yoshida M."/>
        </authorList>
    </citation>
    <scope>SUBCELLULAR LOCATION [LARGE SCALE ANALYSIS]</scope>
</reference>
<comment type="function">
    <text evidence="4">GTPase-activating protein for the ADP ribosylation factor family.</text>
</comment>
<comment type="subcellular location">
    <subcellularLocation>
        <location evidence="3">Cytoplasm</location>
    </subcellularLocation>
</comment>
<feature type="chain" id="PRO_0000318102" description="Uncharacterized protein C622.14">
    <location>
        <begin position="1"/>
        <end position="321"/>
    </location>
</feature>
<feature type="domain" description="Arf-GAP" evidence="1">
    <location>
        <begin position="2"/>
        <end position="119"/>
    </location>
</feature>
<feature type="zinc finger region" description="C4-type" evidence="1">
    <location>
        <begin position="17"/>
        <end position="40"/>
    </location>
</feature>
<feature type="region of interest" description="Disordered" evidence="2">
    <location>
        <begin position="160"/>
        <end position="201"/>
    </location>
</feature>
<feature type="region of interest" description="Disordered" evidence="2">
    <location>
        <begin position="281"/>
        <end position="321"/>
    </location>
</feature>
<feature type="compositionally biased region" description="Polar residues" evidence="2">
    <location>
        <begin position="180"/>
        <end position="201"/>
    </location>
</feature>
<feature type="compositionally biased region" description="Polar residues" evidence="2">
    <location>
        <begin position="281"/>
        <end position="290"/>
    </location>
</feature>
<feature type="compositionally biased region" description="Basic and acidic residues" evidence="2">
    <location>
        <begin position="311"/>
        <end position="321"/>
    </location>
</feature>
<gene>
    <name type="ORF">SPCC622.14</name>
</gene>
<accession>O94601</accession>
<sequence length="321" mass="35518">MSYKLDQLTRLPENKKCFDCDAPNPQWASCNLGIFICLDCSGQHRGLGVEKSFVRSITMDNWSERQVKMMEVGGNSNAKTFLSTDPMFSAAGSIREKYNTDIAEDLRQKIRAEVDGVEWVKVDRPKSVSSHASVTSSSTVPTIPSVSKEANDKYFAKLGSINSQRPDDLPPSQGGRYQGFGSSNSVNPNSSARNNGGSFLDQLSSNPVSALSHGWNMFSRSVSQQIQDVNKSYIQPGITKVQDPETRKDYMNAINNFSSNVQEGAKQSFTQLKSFLDENVYSENPQNTRGTYDAEIDSPYSALAASPPPEDYSKKNFDKHD</sequence>
<name>YC8E_SCHPO</name>